<sequence length="205" mass="23702">MSKRVQAKHKLDRRMGQNIWGRPKSPVNRREYGPGQHGQRRKGKMSDFGTQLRAKQKLKGYYGNITEKQFRRYYAEAIRLRGDSGENLIGLLERRLDAVVYRSKFVATPFAARQFVNHGHIKVNGRRVNIPSYQVKAGDVIEVKEASRQLEIVVVASQLAERDVPDYIEVDHHKMTARVTRIPGLTEVPYPVQMEPNLVIEFYSR</sequence>
<name>RS4_METC4</name>
<gene>
    <name evidence="1" type="primary">rpsD</name>
    <name type="ordered locus">Mchl_5204</name>
</gene>
<evidence type="ECO:0000255" key="1">
    <source>
        <dbReference type="HAMAP-Rule" id="MF_01306"/>
    </source>
</evidence>
<evidence type="ECO:0000256" key="2">
    <source>
        <dbReference type="SAM" id="MobiDB-lite"/>
    </source>
</evidence>
<evidence type="ECO:0000305" key="3"/>
<proteinExistence type="inferred from homology"/>
<keyword id="KW-0687">Ribonucleoprotein</keyword>
<keyword id="KW-0689">Ribosomal protein</keyword>
<keyword id="KW-0694">RNA-binding</keyword>
<keyword id="KW-0699">rRNA-binding</keyword>
<protein>
    <recommendedName>
        <fullName evidence="1">Small ribosomal subunit protein uS4</fullName>
    </recommendedName>
    <alternativeName>
        <fullName evidence="3">30S ribosomal protein S4</fullName>
    </alternativeName>
</protein>
<organism>
    <name type="scientific">Methylorubrum extorquens (strain CM4 / NCIMB 13688)</name>
    <name type="common">Methylobacterium extorquens</name>
    <dbReference type="NCBI Taxonomy" id="440085"/>
    <lineage>
        <taxon>Bacteria</taxon>
        <taxon>Pseudomonadati</taxon>
        <taxon>Pseudomonadota</taxon>
        <taxon>Alphaproteobacteria</taxon>
        <taxon>Hyphomicrobiales</taxon>
        <taxon>Methylobacteriaceae</taxon>
        <taxon>Methylorubrum</taxon>
    </lineage>
</organism>
<comment type="function">
    <text evidence="1">One of the primary rRNA binding proteins, it binds directly to 16S rRNA where it nucleates assembly of the body of the 30S subunit.</text>
</comment>
<comment type="function">
    <text evidence="1">With S5 and S12 plays an important role in translational accuracy.</text>
</comment>
<comment type="subunit">
    <text evidence="1">Part of the 30S ribosomal subunit. Contacts protein S5. The interaction surface between S4 and S5 is involved in control of translational fidelity.</text>
</comment>
<comment type="similarity">
    <text evidence="1">Belongs to the universal ribosomal protein uS4 family.</text>
</comment>
<accession>B7KVN1</accession>
<reference key="1">
    <citation type="submission" date="2008-12" db="EMBL/GenBank/DDBJ databases">
        <title>Complete sequence of chromosome of Methylobacterium chloromethanicum CM4.</title>
        <authorList>
            <consortium name="US DOE Joint Genome Institute"/>
            <person name="Lucas S."/>
            <person name="Copeland A."/>
            <person name="Lapidus A."/>
            <person name="Glavina del Rio T."/>
            <person name="Dalin E."/>
            <person name="Tice H."/>
            <person name="Bruce D."/>
            <person name="Goodwin L."/>
            <person name="Pitluck S."/>
            <person name="Chertkov O."/>
            <person name="Brettin T."/>
            <person name="Detter J.C."/>
            <person name="Han C."/>
            <person name="Larimer F."/>
            <person name="Land M."/>
            <person name="Hauser L."/>
            <person name="Kyrpides N."/>
            <person name="Mikhailova N."/>
            <person name="Marx C."/>
            <person name="Richardson P."/>
        </authorList>
    </citation>
    <scope>NUCLEOTIDE SEQUENCE [LARGE SCALE GENOMIC DNA]</scope>
    <source>
        <strain>CM4 / NCIMB 13688</strain>
    </source>
</reference>
<dbReference type="EMBL" id="CP001298">
    <property type="protein sequence ID" value="ACK85966.1"/>
    <property type="molecule type" value="Genomic_DNA"/>
</dbReference>
<dbReference type="RefSeq" id="WP_003603696.1">
    <property type="nucleotide sequence ID" value="NC_011757.1"/>
</dbReference>
<dbReference type="SMR" id="B7KVN1"/>
<dbReference type="GeneID" id="72992470"/>
<dbReference type="KEGG" id="mch:Mchl_5204"/>
<dbReference type="HOGENOM" id="CLU_092403_0_0_5"/>
<dbReference type="Proteomes" id="UP000002385">
    <property type="component" value="Chromosome"/>
</dbReference>
<dbReference type="GO" id="GO:0015935">
    <property type="term" value="C:small ribosomal subunit"/>
    <property type="evidence" value="ECO:0007669"/>
    <property type="project" value="InterPro"/>
</dbReference>
<dbReference type="GO" id="GO:0019843">
    <property type="term" value="F:rRNA binding"/>
    <property type="evidence" value="ECO:0007669"/>
    <property type="project" value="UniProtKB-UniRule"/>
</dbReference>
<dbReference type="GO" id="GO:0003735">
    <property type="term" value="F:structural constituent of ribosome"/>
    <property type="evidence" value="ECO:0007669"/>
    <property type="project" value="InterPro"/>
</dbReference>
<dbReference type="GO" id="GO:0042274">
    <property type="term" value="P:ribosomal small subunit biogenesis"/>
    <property type="evidence" value="ECO:0007669"/>
    <property type="project" value="TreeGrafter"/>
</dbReference>
<dbReference type="GO" id="GO:0006412">
    <property type="term" value="P:translation"/>
    <property type="evidence" value="ECO:0007669"/>
    <property type="project" value="UniProtKB-UniRule"/>
</dbReference>
<dbReference type="CDD" id="cd00165">
    <property type="entry name" value="S4"/>
    <property type="match status" value="1"/>
</dbReference>
<dbReference type="FunFam" id="3.10.290.10:FF:000001">
    <property type="entry name" value="30S ribosomal protein S4"/>
    <property type="match status" value="1"/>
</dbReference>
<dbReference type="Gene3D" id="1.10.1050.10">
    <property type="entry name" value="Ribosomal Protein S4 Delta 41, Chain A, domain 1"/>
    <property type="match status" value="1"/>
</dbReference>
<dbReference type="Gene3D" id="3.10.290.10">
    <property type="entry name" value="RNA-binding S4 domain"/>
    <property type="match status" value="1"/>
</dbReference>
<dbReference type="HAMAP" id="MF_01306_B">
    <property type="entry name" value="Ribosomal_uS4_B"/>
    <property type="match status" value="1"/>
</dbReference>
<dbReference type="InterPro" id="IPR022801">
    <property type="entry name" value="Ribosomal_uS4"/>
</dbReference>
<dbReference type="InterPro" id="IPR005709">
    <property type="entry name" value="Ribosomal_uS4_bac-type"/>
</dbReference>
<dbReference type="InterPro" id="IPR018079">
    <property type="entry name" value="Ribosomal_uS4_CS"/>
</dbReference>
<dbReference type="InterPro" id="IPR001912">
    <property type="entry name" value="Ribosomal_uS4_N"/>
</dbReference>
<dbReference type="InterPro" id="IPR002942">
    <property type="entry name" value="S4_RNA-bd"/>
</dbReference>
<dbReference type="InterPro" id="IPR036986">
    <property type="entry name" value="S4_RNA-bd_sf"/>
</dbReference>
<dbReference type="NCBIfam" id="NF003717">
    <property type="entry name" value="PRK05327.1"/>
    <property type="match status" value="1"/>
</dbReference>
<dbReference type="NCBIfam" id="TIGR01017">
    <property type="entry name" value="rpsD_bact"/>
    <property type="match status" value="1"/>
</dbReference>
<dbReference type="PANTHER" id="PTHR11831">
    <property type="entry name" value="30S 40S RIBOSOMAL PROTEIN"/>
    <property type="match status" value="1"/>
</dbReference>
<dbReference type="PANTHER" id="PTHR11831:SF4">
    <property type="entry name" value="SMALL RIBOSOMAL SUBUNIT PROTEIN US4M"/>
    <property type="match status" value="1"/>
</dbReference>
<dbReference type="Pfam" id="PF00163">
    <property type="entry name" value="Ribosomal_S4"/>
    <property type="match status" value="1"/>
</dbReference>
<dbReference type="Pfam" id="PF01479">
    <property type="entry name" value="S4"/>
    <property type="match status" value="1"/>
</dbReference>
<dbReference type="SMART" id="SM01390">
    <property type="entry name" value="Ribosomal_S4"/>
    <property type="match status" value="1"/>
</dbReference>
<dbReference type="SMART" id="SM00363">
    <property type="entry name" value="S4"/>
    <property type="match status" value="1"/>
</dbReference>
<dbReference type="SUPFAM" id="SSF55174">
    <property type="entry name" value="Alpha-L RNA-binding motif"/>
    <property type="match status" value="1"/>
</dbReference>
<dbReference type="PROSITE" id="PS00632">
    <property type="entry name" value="RIBOSOMAL_S4"/>
    <property type="match status" value="1"/>
</dbReference>
<dbReference type="PROSITE" id="PS50889">
    <property type="entry name" value="S4"/>
    <property type="match status" value="1"/>
</dbReference>
<feature type="chain" id="PRO_1000165410" description="Small ribosomal subunit protein uS4">
    <location>
        <begin position="1"/>
        <end position="205"/>
    </location>
</feature>
<feature type="domain" description="S4 RNA-binding" evidence="1">
    <location>
        <begin position="94"/>
        <end position="155"/>
    </location>
</feature>
<feature type="region of interest" description="Disordered" evidence="2">
    <location>
        <begin position="1"/>
        <end position="49"/>
    </location>
</feature>
<feature type="compositionally biased region" description="Basic residues" evidence="2">
    <location>
        <begin position="1"/>
        <end position="12"/>
    </location>
</feature>